<reference key="1">
    <citation type="submission" date="2006-12" db="EMBL/GenBank/DDBJ databases">
        <title>Complete sequence of chromosome 1 of Acidovorax sp. JS42.</title>
        <authorList>
            <person name="Copeland A."/>
            <person name="Lucas S."/>
            <person name="Lapidus A."/>
            <person name="Barry K."/>
            <person name="Detter J.C."/>
            <person name="Glavina del Rio T."/>
            <person name="Dalin E."/>
            <person name="Tice H."/>
            <person name="Pitluck S."/>
            <person name="Chertkov O."/>
            <person name="Brettin T."/>
            <person name="Bruce D."/>
            <person name="Han C."/>
            <person name="Tapia R."/>
            <person name="Gilna P."/>
            <person name="Schmutz J."/>
            <person name="Larimer F."/>
            <person name="Land M."/>
            <person name="Hauser L."/>
            <person name="Kyrpides N."/>
            <person name="Kim E."/>
            <person name="Stahl D."/>
            <person name="Richardson P."/>
        </authorList>
    </citation>
    <scope>NUCLEOTIDE SEQUENCE [LARGE SCALE GENOMIC DNA]</scope>
    <source>
        <strain>JS42</strain>
    </source>
</reference>
<organism>
    <name type="scientific">Acidovorax sp. (strain JS42)</name>
    <dbReference type="NCBI Taxonomy" id="232721"/>
    <lineage>
        <taxon>Bacteria</taxon>
        <taxon>Pseudomonadati</taxon>
        <taxon>Pseudomonadota</taxon>
        <taxon>Betaproteobacteria</taxon>
        <taxon>Burkholderiales</taxon>
        <taxon>Comamonadaceae</taxon>
        <taxon>Acidovorax</taxon>
    </lineage>
</organism>
<gene>
    <name evidence="1" type="primary">rpmA</name>
    <name type="ordered locus">Ajs_0842</name>
</gene>
<comment type="similarity">
    <text evidence="1">Belongs to the bacterial ribosomal protein bL27 family.</text>
</comment>
<evidence type="ECO:0000255" key="1">
    <source>
        <dbReference type="HAMAP-Rule" id="MF_00539"/>
    </source>
</evidence>
<evidence type="ECO:0000256" key="2">
    <source>
        <dbReference type="SAM" id="MobiDB-lite"/>
    </source>
</evidence>
<evidence type="ECO:0000305" key="3"/>
<protein>
    <recommendedName>
        <fullName evidence="1">Large ribosomal subunit protein bL27</fullName>
    </recommendedName>
    <alternativeName>
        <fullName evidence="3">50S ribosomal protein L27</fullName>
    </alternativeName>
</protein>
<keyword id="KW-0687">Ribonucleoprotein</keyword>
<keyword id="KW-0689">Ribosomal protein</keyword>
<proteinExistence type="inferred from homology"/>
<name>RL27_ACISJ</name>
<accession>A1W4A9</accession>
<dbReference type="EMBL" id="CP000539">
    <property type="protein sequence ID" value="ABM41084.1"/>
    <property type="molecule type" value="Genomic_DNA"/>
</dbReference>
<dbReference type="SMR" id="A1W4A9"/>
<dbReference type="STRING" id="232721.Ajs_0842"/>
<dbReference type="KEGG" id="ajs:Ajs_0842"/>
<dbReference type="eggNOG" id="COG0211">
    <property type="taxonomic scope" value="Bacteria"/>
</dbReference>
<dbReference type="HOGENOM" id="CLU_095424_4_1_4"/>
<dbReference type="Proteomes" id="UP000000645">
    <property type="component" value="Chromosome"/>
</dbReference>
<dbReference type="GO" id="GO:0022625">
    <property type="term" value="C:cytosolic large ribosomal subunit"/>
    <property type="evidence" value="ECO:0007669"/>
    <property type="project" value="TreeGrafter"/>
</dbReference>
<dbReference type="GO" id="GO:0003735">
    <property type="term" value="F:structural constituent of ribosome"/>
    <property type="evidence" value="ECO:0007669"/>
    <property type="project" value="InterPro"/>
</dbReference>
<dbReference type="GO" id="GO:0006412">
    <property type="term" value="P:translation"/>
    <property type="evidence" value="ECO:0007669"/>
    <property type="project" value="UniProtKB-UniRule"/>
</dbReference>
<dbReference type="FunFam" id="2.40.50.100:FF:000020">
    <property type="entry name" value="50S ribosomal protein L27"/>
    <property type="match status" value="1"/>
</dbReference>
<dbReference type="Gene3D" id="2.40.50.100">
    <property type="match status" value="1"/>
</dbReference>
<dbReference type="HAMAP" id="MF_00539">
    <property type="entry name" value="Ribosomal_bL27"/>
    <property type="match status" value="1"/>
</dbReference>
<dbReference type="InterPro" id="IPR001684">
    <property type="entry name" value="Ribosomal_bL27"/>
</dbReference>
<dbReference type="InterPro" id="IPR018261">
    <property type="entry name" value="Ribosomal_bL27_CS"/>
</dbReference>
<dbReference type="NCBIfam" id="TIGR00062">
    <property type="entry name" value="L27"/>
    <property type="match status" value="1"/>
</dbReference>
<dbReference type="PANTHER" id="PTHR15893:SF0">
    <property type="entry name" value="LARGE RIBOSOMAL SUBUNIT PROTEIN BL27M"/>
    <property type="match status" value="1"/>
</dbReference>
<dbReference type="PANTHER" id="PTHR15893">
    <property type="entry name" value="RIBOSOMAL PROTEIN L27"/>
    <property type="match status" value="1"/>
</dbReference>
<dbReference type="Pfam" id="PF01016">
    <property type="entry name" value="Ribosomal_L27"/>
    <property type="match status" value="1"/>
</dbReference>
<dbReference type="PRINTS" id="PR00063">
    <property type="entry name" value="RIBOSOMALL27"/>
</dbReference>
<dbReference type="SUPFAM" id="SSF110324">
    <property type="entry name" value="Ribosomal L27 protein-like"/>
    <property type="match status" value="1"/>
</dbReference>
<dbReference type="PROSITE" id="PS00831">
    <property type="entry name" value="RIBOSOMAL_L27"/>
    <property type="match status" value="1"/>
</dbReference>
<sequence length="85" mass="8752">MAQKKGGGSTRNGRDSKPKMLGVKAYGGELISAGSIIVRQRGTRIHPGVNVGVGKDHTLFALVDGHVSFGTKGALSKHTVSVTPA</sequence>
<feature type="chain" id="PRO_1000017397" description="Large ribosomal subunit protein bL27">
    <location>
        <begin position="1"/>
        <end position="85"/>
    </location>
</feature>
<feature type="region of interest" description="Disordered" evidence="2">
    <location>
        <begin position="1"/>
        <end position="20"/>
    </location>
</feature>
<feature type="compositionally biased region" description="Gly residues" evidence="2">
    <location>
        <begin position="1"/>
        <end position="10"/>
    </location>
</feature>